<name>Y2994_LEGPH</name>
<sequence length="118" mass="13591">MTQEKGKFAEQLALNYLKENGLALVMQNYHCRLGEIDLIMREGSYLVFVEVRSRSNMNFGGGLASITYEKKQKIIKATSHYMIKYRIQDKFPIRFDVISIDGKSNKITWLKNAFDAGC</sequence>
<proteinExistence type="inferred from homology"/>
<gene>
    <name type="ordered locus">lpg2994</name>
</gene>
<protein>
    <recommendedName>
        <fullName evidence="1">UPF0102 protein lpg2994</fullName>
    </recommendedName>
</protein>
<keyword id="KW-1185">Reference proteome</keyword>
<reference key="1">
    <citation type="journal article" date="2004" name="Science">
        <title>The genomic sequence of the accidental pathogen Legionella pneumophila.</title>
        <authorList>
            <person name="Chien M."/>
            <person name="Morozova I."/>
            <person name="Shi S."/>
            <person name="Sheng H."/>
            <person name="Chen J."/>
            <person name="Gomez S.M."/>
            <person name="Asamani G."/>
            <person name="Hill K."/>
            <person name="Nuara J."/>
            <person name="Feder M."/>
            <person name="Rineer J."/>
            <person name="Greenberg J.J."/>
            <person name="Steshenko V."/>
            <person name="Park S.H."/>
            <person name="Zhao B."/>
            <person name="Teplitskaya E."/>
            <person name="Edwards J.R."/>
            <person name="Pampou S."/>
            <person name="Georghiou A."/>
            <person name="Chou I.-C."/>
            <person name="Iannuccilli W."/>
            <person name="Ulz M.E."/>
            <person name="Kim D.H."/>
            <person name="Geringer-Sameth A."/>
            <person name="Goldsberry C."/>
            <person name="Morozov P."/>
            <person name="Fischer S.G."/>
            <person name="Segal G."/>
            <person name="Qu X."/>
            <person name="Rzhetsky A."/>
            <person name="Zhang P."/>
            <person name="Cayanis E."/>
            <person name="De Jong P.J."/>
            <person name="Ju J."/>
            <person name="Kalachikov S."/>
            <person name="Shuman H.A."/>
            <person name="Russo J.J."/>
        </authorList>
    </citation>
    <scope>NUCLEOTIDE SEQUENCE [LARGE SCALE GENOMIC DNA]</scope>
    <source>
        <strain>Philadelphia 1 / ATCC 33152 / DSM 7513</strain>
    </source>
</reference>
<evidence type="ECO:0000255" key="1">
    <source>
        <dbReference type="HAMAP-Rule" id="MF_00048"/>
    </source>
</evidence>
<organism>
    <name type="scientific">Legionella pneumophila subsp. pneumophila (strain Philadelphia 1 / ATCC 33152 / DSM 7513)</name>
    <dbReference type="NCBI Taxonomy" id="272624"/>
    <lineage>
        <taxon>Bacteria</taxon>
        <taxon>Pseudomonadati</taxon>
        <taxon>Pseudomonadota</taxon>
        <taxon>Gammaproteobacteria</taxon>
        <taxon>Legionellales</taxon>
        <taxon>Legionellaceae</taxon>
        <taxon>Legionella</taxon>
    </lineage>
</organism>
<dbReference type="EMBL" id="AE017354">
    <property type="protein sequence ID" value="AAU29039.1"/>
    <property type="molecule type" value="Genomic_DNA"/>
</dbReference>
<dbReference type="RefSeq" id="WP_010948678.1">
    <property type="nucleotide sequence ID" value="NC_002942.5"/>
</dbReference>
<dbReference type="RefSeq" id="YP_096986.1">
    <property type="nucleotide sequence ID" value="NC_002942.5"/>
</dbReference>
<dbReference type="SMR" id="Q5ZR89"/>
<dbReference type="STRING" id="272624.lpg2994"/>
<dbReference type="PaxDb" id="272624-lpg2994"/>
<dbReference type="DNASU" id="3080025"/>
<dbReference type="KEGG" id="lpn:lpg2994"/>
<dbReference type="PATRIC" id="fig|272624.6.peg.3200"/>
<dbReference type="eggNOG" id="COG0792">
    <property type="taxonomic scope" value="Bacteria"/>
</dbReference>
<dbReference type="HOGENOM" id="CLU_115353_1_0_6"/>
<dbReference type="OrthoDB" id="9794876at2"/>
<dbReference type="Proteomes" id="UP000000609">
    <property type="component" value="Chromosome"/>
</dbReference>
<dbReference type="GO" id="GO:0003676">
    <property type="term" value="F:nucleic acid binding"/>
    <property type="evidence" value="ECO:0007669"/>
    <property type="project" value="InterPro"/>
</dbReference>
<dbReference type="CDD" id="cd20736">
    <property type="entry name" value="PoNe_Nuclease"/>
    <property type="match status" value="1"/>
</dbReference>
<dbReference type="Gene3D" id="3.40.1350.10">
    <property type="match status" value="1"/>
</dbReference>
<dbReference type="HAMAP" id="MF_00048">
    <property type="entry name" value="UPF0102"/>
    <property type="match status" value="1"/>
</dbReference>
<dbReference type="InterPro" id="IPR011335">
    <property type="entry name" value="Restrct_endonuc-II-like"/>
</dbReference>
<dbReference type="InterPro" id="IPR011856">
    <property type="entry name" value="tRNA_endonuc-like_dom_sf"/>
</dbReference>
<dbReference type="InterPro" id="IPR003509">
    <property type="entry name" value="UPF0102_YraN-like"/>
</dbReference>
<dbReference type="NCBIfam" id="NF009150">
    <property type="entry name" value="PRK12497.1-3"/>
    <property type="match status" value="1"/>
</dbReference>
<dbReference type="NCBIfam" id="TIGR00252">
    <property type="entry name" value="YraN family protein"/>
    <property type="match status" value="1"/>
</dbReference>
<dbReference type="PANTHER" id="PTHR34039">
    <property type="entry name" value="UPF0102 PROTEIN YRAN"/>
    <property type="match status" value="1"/>
</dbReference>
<dbReference type="PANTHER" id="PTHR34039:SF1">
    <property type="entry name" value="UPF0102 PROTEIN YRAN"/>
    <property type="match status" value="1"/>
</dbReference>
<dbReference type="Pfam" id="PF02021">
    <property type="entry name" value="UPF0102"/>
    <property type="match status" value="1"/>
</dbReference>
<dbReference type="SUPFAM" id="SSF52980">
    <property type="entry name" value="Restriction endonuclease-like"/>
    <property type="match status" value="1"/>
</dbReference>
<feature type="chain" id="PRO_0000336196" description="UPF0102 protein lpg2994">
    <location>
        <begin position="1"/>
        <end position="118"/>
    </location>
</feature>
<accession>Q5ZR89</accession>
<comment type="similarity">
    <text evidence="1">Belongs to the UPF0102 family.</text>
</comment>